<dbReference type="EMBL" id="X75584">
    <property type="protein sequence ID" value="CAA53260.1"/>
    <property type="molecule type" value="Genomic_DNA"/>
</dbReference>
<dbReference type="PIR" id="S43269">
    <property type="entry name" value="S43269"/>
</dbReference>
<dbReference type="SMR" id="P41289"/>
<dbReference type="GO" id="GO:0005743">
    <property type="term" value="C:mitochondrial inner membrane"/>
    <property type="evidence" value="ECO:0007669"/>
    <property type="project" value="UniProtKB-SubCell"/>
</dbReference>
<dbReference type="GO" id="GO:0045275">
    <property type="term" value="C:respiratory chain complex III"/>
    <property type="evidence" value="ECO:0007669"/>
    <property type="project" value="InterPro"/>
</dbReference>
<dbReference type="GO" id="GO:0046872">
    <property type="term" value="F:metal ion binding"/>
    <property type="evidence" value="ECO:0007669"/>
    <property type="project" value="UniProtKB-KW"/>
</dbReference>
<dbReference type="GO" id="GO:0008121">
    <property type="term" value="F:ubiquinol-cytochrome-c reductase activity"/>
    <property type="evidence" value="ECO:0007669"/>
    <property type="project" value="InterPro"/>
</dbReference>
<dbReference type="GO" id="GO:0006122">
    <property type="term" value="P:mitochondrial electron transport, ubiquinol to cytochrome c"/>
    <property type="evidence" value="ECO:0007669"/>
    <property type="project" value="TreeGrafter"/>
</dbReference>
<dbReference type="CDD" id="cd00290">
    <property type="entry name" value="cytochrome_b_C"/>
    <property type="match status" value="1"/>
</dbReference>
<dbReference type="CDD" id="cd00284">
    <property type="entry name" value="Cytochrome_b_N"/>
    <property type="match status" value="1"/>
</dbReference>
<dbReference type="FunFam" id="1.20.810.10:FF:000002">
    <property type="entry name" value="Cytochrome b"/>
    <property type="match status" value="1"/>
</dbReference>
<dbReference type="Gene3D" id="1.20.810.10">
    <property type="entry name" value="Cytochrome Bc1 Complex, Chain C"/>
    <property type="match status" value="1"/>
</dbReference>
<dbReference type="InterPro" id="IPR005798">
    <property type="entry name" value="Cyt_b/b6_C"/>
</dbReference>
<dbReference type="InterPro" id="IPR036150">
    <property type="entry name" value="Cyt_b/b6_C_sf"/>
</dbReference>
<dbReference type="InterPro" id="IPR005797">
    <property type="entry name" value="Cyt_b/b6_N"/>
</dbReference>
<dbReference type="InterPro" id="IPR027387">
    <property type="entry name" value="Cytb/b6-like_sf"/>
</dbReference>
<dbReference type="InterPro" id="IPR030689">
    <property type="entry name" value="Cytochrome_b"/>
</dbReference>
<dbReference type="InterPro" id="IPR048260">
    <property type="entry name" value="Cytochrome_b_C_euk/bac"/>
</dbReference>
<dbReference type="InterPro" id="IPR048259">
    <property type="entry name" value="Cytochrome_b_N_euk/bac"/>
</dbReference>
<dbReference type="InterPro" id="IPR016174">
    <property type="entry name" value="Di-haem_cyt_TM"/>
</dbReference>
<dbReference type="PANTHER" id="PTHR19271">
    <property type="entry name" value="CYTOCHROME B"/>
    <property type="match status" value="1"/>
</dbReference>
<dbReference type="PANTHER" id="PTHR19271:SF16">
    <property type="entry name" value="CYTOCHROME B"/>
    <property type="match status" value="1"/>
</dbReference>
<dbReference type="Pfam" id="PF00032">
    <property type="entry name" value="Cytochrom_B_C"/>
    <property type="match status" value="1"/>
</dbReference>
<dbReference type="Pfam" id="PF00033">
    <property type="entry name" value="Cytochrome_B"/>
    <property type="match status" value="1"/>
</dbReference>
<dbReference type="PIRSF" id="PIRSF038885">
    <property type="entry name" value="COB"/>
    <property type="match status" value="1"/>
</dbReference>
<dbReference type="SUPFAM" id="SSF81648">
    <property type="entry name" value="a domain/subunit of cytochrome bc1 complex (Ubiquinol-cytochrome c reductase)"/>
    <property type="match status" value="1"/>
</dbReference>
<dbReference type="SUPFAM" id="SSF81342">
    <property type="entry name" value="Transmembrane di-heme cytochromes"/>
    <property type="match status" value="1"/>
</dbReference>
<dbReference type="PROSITE" id="PS51003">
    <property type="entry name" value="CYTB_CTER"/>
    <property type="match status" value="1"/>
</dbReference>
<dbReference type="PROSITE" id="PS51002">
    <property type="entry name" value="CYTB_NTER"/>
    <property type="match status" value="1"/>
</dbReference>
<keyword id="KW-0249">Electron transport</keyword>
<keyword id="KW-0349">Heme</keyword>
<keyword id="KW-0408">Iron</keyword>
<keyword id="KW-0472">Membrane</keyword>
<keyword id="KW-0479">Metal-binding</keyword>
<keyword id="KW-0496">Mitochondrion</keyword>
<keyword id="KW-0999">Mitochondrion inner membrane</keyword>
<keyword id="KW-0679">Respiratory chain</keyword>
<keyword id="KW-0812">Transmembrane</keyword>
<keyword id="KW-1133">Transmembrane helix</keyword>
<keyword id="KW-0813">Transport</keyword>
<keyword id="KW-0830">Ubiquinone</keyword>
<comment type="function">
    <text evidence="2">Component of the ubiquinol-cytochrome c reductase complex (complex III or cytochrome b-c1 complex) that is part of the mitochondrial respiratory chain. The b-c1 complex mediates electron transfer from ubiquinol to cytochrome c. Contributes to the generation of a proton gradient across the mitochondrial membrane that is then used for ATP synthesis.</text>
</comment>
<comment type="cofactor">
    <cofactor evidence="2">
        <name>heme b</name>
        <dbReference type="ChEBI" id="CHEBI:60344"/>
    </cofactor>
    <text evidence="2">Binds 2 heme b groups non-covalently.</text>
</comment>
<comment type="subunit">
    <text evidence="2">The cytochrome bc1 complex contains 11 subunits: 3 respiratory subunits (MT-CYB, CYC1 and UQCRFS1), 2 core proteins (UQCRC1 and UQCRC2) and 6 low-molecular weight proteins (UQCRH/QCR6, UQCRB/QCR7, UQCRQ/QCR8, UQCR10/QCR9, UQCR11/QCR10 and a cleavage product of UQCRFS1). This cytochrome bc1 complex then forms a dimer.</text>
</comment>
<comment type="subcellular location">
    <subcellularLocation>
        <location evidence="2">Mitochondrion inner membrane</location>
        <topology evidence="2">Multi-pass membrane protein</topology>
    </subcellularLocation>
</comment>
<comment type="miscellaneous">
    <text evidence="1">Heme 1 (or BL or b562) is low-potential and absorbs at about 562 nm, and heme 2 (or BH or b566) is high-potential and absorbs at about 566 nm.</text>
</comment>
<comment type="similarity">
    <text evidence="3 4">Belongs to the cytochrome b family.</text>
</comment>
<comment type="caution">
    <text evidence="2">The full-length protein contains only eight transmembrane helices, not nine as predicted by bioinformatics tools.</text>
</comment>
<protein>
    <recommendedName>
        <fullName>Cytochrome b</fullName>
    </recommendedName>
    <alternativeName>
        <fullName>Complex III subunit 3</fullName>
    </alternativeName>
    <alternativeName>
        <fullName>Complex III subunit III</fullName>
    </alternativeName>
    <alternativeName>
        <fullName>Cytochrome b-c1 complex subunit 3</fullName>
    </alternativeName>
    <alternativeName>
        <fullName>Ubiquinol-cytochrome-c reductase complex cytochrome b subunit</fullName>
    </alternativeName>
</protein>
<accession>P41289</accession>
<proteinExistence type="inferred from homology"/>
<reference key="1">
    <citation type="journal article" date="1994" name="Nature">
        <title>Relationship of baleen whales established by cytochrome b gene sequence comparison.</title>
        <authorList>
            <person name="Arnason U."/>
            <person name="Gullberg A."/>
        </authorList>
    </citation>
    <scope>NUCLEOTIDE SEQUENCE [GENOMIC DNA]</scope>
</reference>
<feature type="chain" id="PRO_0000061167" description="Cytochrome b">
    <location>
        <begin position="1"/>
        <end position="379"/>
    </location>
</feature>
<feature type="transmembrane region" description="Helical" evidence="2">
    <location>
        <begin position="33"/>
        <end position="53"/>
    </location>
</feature>
<feature type="transmembrane region" description="Helical" evidence="2">
    <location>
        <begin position="77"/>
        <end position="98"/>
    </location>
</feature>
<feature type="transmembrane region" description="Helical" evidence="2">
    <location>
        <begin position="113"/>
        <end position="133"/>
    </location>
</feature>
<feature type="transmembrane region" description="Helical" evidence="2">
    <location>
        <begin position="178"/>
        <end position="198"/>
    </location>
</feature>
<feature type="transmembrane region" description="Helical" evidence="2">
    <location>
        <begin position="226"/>
        <end position="246"/>
    </location>
</feature>
<feature type="transmembrane region" description="Helical" evidence="2">
    <location>
        <begin position="288"/>
        <end position="308"/>
    </location>
</feature>
<feature type="transmembrane region" description="Helical" evidence="2">
    <location>
        <begin position="320"/>
        <end position="340"/>
    </location>
</feature>
<feature type="transmembrane region" description="Helical" evidence="2">
    <location>
        <begin position="347"/>
        <end position="367"/>
    </location>
</feature>
<feature type="binding site" description="axial binding residue" evidence="2">
    <location>
        <position position="83"/>
    </location>
    <ligand>
        <name>heme b</name>
        <dbReference type="ChEBI" id="CHEBI:60344"/>
        <label>b562</label>
    </ligand>
    <ligandPart>
        <name>Fe</name>
        <dbReference type="ChEBI" id="CHEBI:18248"/>
    </ligandPart>
</feature>
<feature type="binding site" description="axial binding residue" evidence="2">
    <location>
        <position position="97"/>
    </location>
    <ligand>
        <name>heme b</name>
        <dbReference type="ChEBI" id="CHEBI:60344"/>
        <label>b566</label>
    </ligand>
    <ligandPart>
        <name>Fe</name>
        <dbReference type="ChEBI" id="CHEBI:18248"/>
    </ligandPart>
</feature>
<feature type="binding site" description="axial binding residue" evidence="2">
    <location>
        <position position="182"/>
    </location>
    <ligand>
        <name>heme b</name>
        <dbReference type="ChEBI" id="CHEBI:60344"/>
        <label>b562</label>
    </ligand>
    <ligandPart>
        <name>Fe</name>
        <dbReference type="ChEBI" id="CHEBI:18248"/>
    </ligandPart>
</feature>
<feature type="binding site" description="axial binding residue" evidence="2">
    <location>
        <position position="196"/>
    </location>
    <ligand>
        <name>heme b</name>
        <dbReference type="ChEBI" id="CHEBI:60344"/>
        <label>b566</label>
    </ligand>
    <ligandPart>
        <name>Fe</name>
        <dbReference type="ChEBI" id="CHEBI:18248"/>
    </ligandPart>
</feature>
<feature type="binding site" evidence="2">
    <location>
        <position position="201"/>
    </location>
    <ligand>
        <name>a ubiquinone</name>
        <dbReference type="ChEBI" id="CHEBI:16389"/>
    </ligand>
</feature>
<evidence type="ECO:0000250" key="1"/>
<evidence type="ECO:0000250" key="2">
    <source>
        <dbReference type="UniProtKB" id="P00157"/>
    </source>
</evidence>
<evidence type="ECO:0000255" key="3">
    <source>
        <dbReference type="PROSITE-ProRule" id="PRU00967"/>
    </source>
</evidence>
<evidence type="ECO:0000255" key="4">
    <source>
        <dbReference type="PROSITE-ProRule" id="PRU00968"/>
    </source>
</evidence>
<organism>
    <name type="scientific">Megaptera novaeangliae</name>
    <name type="common">Humpback whale</name>
    <name type="synonym">Balaena novaeangliae</name>
    <dbReference type="NCBI Taxonomy" id="9773"/>
    <lineage>
        <taxon>Eukaryota</taxon>
        <taxon>Metazoa</taxon>
        <taxon>Chordata</taxon>
        <taxon>Craniata</taxon>
        <taxon>Vertebrata</taxon>
        <taxon>Euteleostomi</taxon>
        <taxon>Mammalia</taxon>
        <taxon>Eutheria</taxon>
        <taxon>Laurasiatheria</taxon>
        <taxon>Artiodactyla</taxon>
        <taxon>Whippomorpha</taxon>
        <taxon>Cetacea</taxon>
        <taxon>Mysticeti</taxon>
        <taxon>Balaenopteridae</taxon>
        <taxon>Megaptera</taxon>
    </lineage>
</organism>
<sequence length="379" mass="42942">MTNIRKTHPLMKIINDTFIDLPTPSNISSWWNFGSLLGLCLIMQILTGLFLAMHYTPDTTTAFSSVTHICRDVNYGWIIRYLHANGASMFFICLYAHMGRGLYYGSYAFRETWNIGVILLFTVMATAFVGYVLPWGQMSFWGATVITNLLSAIPYIGTTLVEWIWGGFSVDKATLTRFFAFHFILPFIITALAIVHLIFLHETGSNNPTGIPSNMDKIPFHPYYTIKDTLGALLLILTLLMLTLFAPDLLGDPDNYTPANPLSTPAHIKPEWYFLFAYAILRSIPNKLGGVLALLLSILILAFIPMLHTSKQRSMMFRPFSQFLFWMLVADLLALTWIGGQPVEHPYMIVGQLASILYFLLILVLMPMTSLIENKLMKW</sequence>
<geneLocation type="mitochondrion"/>
<gene>
    <name type="primary">MT-CYB</name>
    <name type="synonym">COB</name>
    <name type="synonym">CYTB</name>
    <name type="synonym">MTCYB</name>
</gene>
<name>CYB_MEGNO</name>